<keyword id="KW-1185">Reference proteome</keyword>
<keyword id="KW-0687">Ribonucleoprotein</keyword>
<keyword id="KW-0689">Ribosomal protein</keyword>
<keyword id="KW-0694">RNA-binding</keyword>
<keyword id="KW-0699">rRNA-binding</keyword>
<name>RL22_HERAR</name>
<comment type="function">
    <text evidence="1">This protein binds specifically to 23S rRNA; its binding is stimulated by other ribosomal proteins, e.g. L4, L17, and L20. It is important during the early stages of 50S assembly. It makes multiple contacts with different domains of the 23S rRNA in the assembled 50S subunit and ribosome (By similarity).</text>
</comment>
<comment type="function">
    <text evidence="1">The globular domain of the protein is located near the polypeptide exit tunnel on the outside of the subunit, while an extended beta-hairpin is found that lines the wall of the exit tunnel in the center of the 70S ribosome.</text>
</comment>
<comment type="subunit">
    <text evidence="1">Part of the 50S ribosomal subunit.</text>
</comment>
<comment type="similarity">
    <text evidence="1">Belongs to the universal ribosomal protein uL22 family.</text>
</comment>
<gene>
    <name evidence="1" type="primary">rplV</name>
    <name type="ordered locus">HEAR3161</name>
</gene>
<reference key="1">
    <citation type="journal article" date="2007" name="PLoS Genet.">
        <title>A tale of two oxidation states: bacterial colonization of arsenic-rich environments.</title>
        <authorList>
            <person name="Muller D."/>
            <person name="Medigue C."/>
            <person name="Koechler S."/>
            <person name="Barbe V."/>
            <person name="Barakat M."/>
            <person name="Talla E."/>
            <person name="Bonnefoy V."/>
            <person name="Krin E."/>
            <person name="Arsene-Ploetze F."/>
            <person name="Carapito C."/>
            <person name="Chandler M."/>
            <person name="Cournoyer B."/>
            <person name="Cruveiller S."/>
            <person name="Dossat C."/>
            <person name="Duval S."/>
            <person name="Heymann M."/>
            <person name="Leize E."/>
            <person name="Lieutaud A."/>
            <person name="Lievremont D."/>
            <person name="Makita Y."/>
            <person name="Mangenot S."/>
            <person name="Nitschke W."/>
            <person name="Ortet P."/>
            <person name="Perdrial N."/>
            <person name="Schoepp B."/>
            <person name="Siguier P."/>
            <person name="Simeonova D.D."/>
            <person name="Rouy Z."/>
            <person name="Segurens B."/>
            <person name="Turlin E."/>
            <person name="Vallenet D."/>
            <person name="van Dorsselaer A."/>
            <person name="Weiss S."/>
            <person name="Weissenbach J."/>
            <person name="Lett M.-C."/>
            <person name="Danchin A."/>
            <person name="Bertin P.N."/>
        </authorList>
    </citation>
    <scope>NUCLEOTIDE SEQUENCE [LARGE SCALE GENOMIC DNA]</scope>
    <source>
        <strain>ULPAs1</strain>
    </source>
</reference>
<organism>
    <name type="scientific">Herminiimonas arsenicoxydans</name>
    <dbReference type="NCBI Taxonomy" id="204773"/>
    <lineage>
        <taxon>Bacteria</taxon>
        <taxon>Pseudomonadati</taxon>
        <taxon>Pseudomonadota</taxon>
        <taxon>Betaproteobacteria</taxon>
        <taxon>Burkholderiales</taxon>
        <taxon>Oxalobacteraceae</taxon>
        <taxon>Herminiimonas</taxon>
    </lineage>
</organism>
<accession>A4G9T3</accession>
<protein>
    <recommendedName>
        <fullName evidence="1">Large ribosomal subunit protein uL22</fullName>
    </recommendedName>
    <alternativeName>
        <fullName evidence="2">50S ribosomal protein L22</fullName>
    </alternativeName>
</protein>
<sequence length="109" mass="11974">METKAILKGVRLSDQKGRLVADQIRGKKVDAALNLLQFSPKKGAAIIKRVLESAIANAEHNDGADIDELFVKTIYVEKGPILKRFTARAKGRGDRISKQSCHIYVTVGN</sequence>
<dbReference type="EMBL" id="CU207211">
    <property type="protein sequence ID" value="CAL63270.1"/>
    <property type="molecule type" value="Genomic_DNA"/>
</dbReference>
<dbReference type="SMR" id="A4G9T3"/>
<dbReference type="STRING" id="204773.HEAR3161"/>
<dbReference type="KEGG" id="har:HEAR3161"/>
<dbReference type="eggNOG" id="COG0091">
    <property type="taxonomic scope" value="Bacteria"/>
</dbReference>
<dbReference type="HOGENOM" id="CLU_083987_3_3_4"/>
<dbReference type="OrthoDB" id="9805969at2"/>
<dbReference type="Proteomes" id="UP000006697">
    <property type="component" value="Chromosome"/>
</dbReference>
<dbReference type="GO" id="GO:0022625">
    <property type="term" value="C:cytosolic large ribosomal subunit"/>
    <property type="evidence" value="ECO:0007669"/>
    <property type="project" value="TreeGrafter"/>
</dbReference>
<dbReference type="GO" id="GO:0019843">
    <property type="term" value="F:rRNA binding"/>
    <property type="evidence" value="ECO:0007669"/>
    <property type="project" value="UniProtKB-UniRule"/>
</dbReference>
<dbReference type="GO" id="GO:0003735">
    <property type="term" value="F:structural constituent of ribosome"/>
    <property type="evidence" value="ECO:0007669"/>
    <property type="project" value="InterPro"/>
</dbReference>
<dbReference type="GO" id="GO:0006412">
    <property type="term" value="P:translation"/>
    <property type="evidence" value="ECO:0007669"/>
    <property type="project" value="UniProtKB-UniRule"/>
</dbReference>
<dbReference type="CDD" id="cd00336">
    <property type="entry name" value="Ribosomal_L22"/>
    <property type="match status" value="1"/>
</dbReference>
<dbReference type="FunFam" id="3.90.470.10:FF:000001">
    <property type="entry name" value="50S ribosomal protein L22"/>
    <property type="match status" value="1"/>
</dbReference>
<dbReference type="Gene3D" id="3.90.470.10">
    <property type="entry name" value="Ribosomal protein L22/L17"/>
    <property type="match status" value="1"/>
</dbReference>
<dbReference type="HAMAP" id="MF_01331_B">
    <property type="entry name" value="Ribosomal_uL22_B"/>
    <property type="match status" value="1"/>
</dbReference>
<dbReference type="InterPro" id="IPR001063">
    <property type="entry name" value="Ribosomal_uL22"/>
</dbReference>
<dbReference type="InterPro" id="IPR005727">
    <property type="entry name" value="Ribosomal_uL22_bac/chlpt-type"/>
</dbReference>
<dbReference type="InterPro" id="IPR047867">
    <property type="entry name" value="Ribosomal_uL22_bac/org-type"/>
</dbReference>
<dbReference type="InterPro" id="IPR018260">
    <property type="entry name" value="Ribosomal_uL22_CS"/>
</dbReference>
<dbReference type="InterPro" id="IPR036394">
    <property type="entry name" value="Ribosomal_uL22_sf"/>
</dbReference>
<dbReference type="NCBIfam" id="TIGR01044">
    <property type="entry name" value="rplV_bact"/>
    <property type="match status" value="1"/>
</dbReference>
<dbReference type="PANTHER" id="PTHR13501">
    <property type="entry name" value="CHLOROPLAST 50S RIBOSOMAL PROTEIN L22-RELATED"/>
    <property type="match status" value="1"/>
</dbReference>
<dbReference type="PANTHER" id="PTHR13501:SF8">
    <property type="entry name" value="LARGE RIBOSOMAL SUBUNIT PROTEIN UL22M"/>
    <property type="match status" value="1"/>
</dbReference>
<dbReference type="Pfam" id="PF00237">
    <property type="entry name" value="Ribosomal_L22"/>
    <property type="match status" value="1"/>
</dbReference>
<dbReference type="SUPFAM" id="SSF54843">
    <property type="entry name" value="Ribosomal protein L22"/>
    <property type="match status" value="1"/>
</dbReference>
<dbReference type="PROSITE" id="PS00464">
    <property type="entry name" value="RIBOSOMAL_L22"/>
    <property type="match status" value="1"/>
</dbReference>
<proteinExistence type="inferred from homology"/>
<evidence type="ECO:0000255" key="1">
    <source>
        <dbReference type="HAMAP-Rule" id="MF_01331"/>
    </source>
</evidence>
<evidence type="ECO:0000305" key="2"/>
<feature type="chain" id="PRO_1000052584" description="Large ribosomal subunit protein uL22">
    <location>
        <begin position="1"/>
        <end position="109"/>
    </location>
</feature>